<proteinExistence type="inferred from homology"/>
<reference key="1">
    <citation type="journal article" date="2010" name="Genome Biol. Evol.">
        <title>Continuing evolution of Burkholderia mallei through genome reduction and large-scale rearrangements.</title>
        <authorList>
            <person name="Losada L."/>
            <person name="Ronning C.M."/>
            <person name="DeShazer D."/>
            <person name="Woods D."/>
            <person name="Fedorova N."/>
            <person name="Kim H.S."/>
            <person name="Shabalina S.A."/>
            <person name="Pearson T.R."/>
            <person name="Brinkac L."/>
            <person name="Tan P."/>
            <person name="Nandi T."/>
            <person name="Crabtree J."/>
            <person name="Badger J."/>
            <person name="Beckstrom-Sternberg S."/>
            <person name="Saqib M."/>
            <person name="Schutzer S.E."/>
            <person name="Keim P."/>
            <person name="Nierman W.C."/>
        </authorList>
    </citation>
    <scope>NUCLEOTIDE SEQUENCE [LARGE SCALE GENOMIC DNA]</scope>
    <source>
        <strain>1106a</strain>
    </source>
</reference>
<keyword id="KW-0963">Cytoplasm</keyword>
<keyword id="KW-0350">Heme biosynthesis</keyword>
<keyword id="KW-0479">Metal-binding</keyword>
<keyword id="KW-0560">Oxidoreductase</keyword>
<keyword id="KW-0627">Porphyrin biosynthesis</keyword>
<organism>
    <name type="scientific">Burkholderia pseudomallei (strain 1106a)</name>
    <dbReference type="NCBI Taxonomy" id="357348"/>
    <lineage>
        <taxon>Bacteria</taxon>
        <taxon>Pseudomonadati</taxon>
        <taxon>Pseudomonadota</taxon>
        <taxon>Betaproteobacteria</taxon>
        <taxon>Burkholderiales</taxon>
        <taxon>Burkholderiaceae</taxon>
        <taxon>Burkholderia</taxon>
        <taxon>pseudomallei group</taxon>
    </lineage>
</organism>
<dbReference type="EC" id="1.3.3.3" evidence="1"/>
<dbReference type="EMBL" id="CP000572">
    <property type="protein sequence ID" value="ABN91786.1"/>
    <property type="molecule type" value="Genomic_DNA"/>
</dbReference>
<dbReference type="RefSeq" id="WP_004526433.1">
    <property type="nucleotide sequence ID" value="NC_009076.1"/>
</dbReference>
<dbReference type="SMR" id="A3NT46"/>
<dbReference type="GeneID" id="93059643"/>
<dbReference type="KEGG" id="bpl:BURPS1106A_1238"/>
<dbReference type="HOGENOM" id="CLU_026169_0_1_4"/>
<dbReference type="UniPathway" id="UPA00251">
    <property type="reaction ID" value="UER00322"/>
</dbReference>
<dbReference type="Proteomes" id="UP000006738">
    <property type="component" value="Chromosome I"/>
</dbReference>
<dbReference type="GO" id="GO:0005737">
    <property type="term" value="C:cytoplasm"/>
    <property type="evidence" value="ECO:0007669"/>
    <property type="project" value="UniProtKB-SubCell"/>
</dbReference>
<dbReference type="GO" id="GO:0004109">
    <property type="term" value="F:coproporphyrinogen oxidase activity"/>
    <property type="evidence" value="ECO:0007669"/>
    <property type="project" value="UniProtKB-UniRule"/>
</dbReference>
<dbReference type="GO" id="GO:0046872">
    <property type="term" value="F:metal ion binding"/>
    <property type="evidence" value="ECO:0007669"/>
    <property type="project" value="UniProtKB-KW"/>
</dbReference>
<dbReference type="GO" id="GO:0042803">
    <property type="term" value="F:protein homodimerization activity"/>
    <property type="evidence" value="ECO:0000250"/>
    <property type="project" value="UniProtKB"/>
</dbReference>
<dbReference type="GO" id="GO:0006782">
    <property type="term" value="P:protoporphyrinogen IX biosynthetic process"/>
    <property type="evidence" value="ECO:0007669"/>
    <property type="project" value="UniProtKB-UniRule"/>
</dbReference>
<dbReference type="FunFam" id="3.40.1500.10:FF:000001">
    <property type="entry name" value="Oxygen-dependent coproporphyrinogen-III oxidase"/>
    <property type="match status" value="1"/>
</dbReference>
<dbReference type="Gene3D" id="3.40.1500.10">
    <property type="entry name" value="Coproporphyrinogen III oxidase, aerobic"/>
    <property type="match status" value="1"/>
</dbReference>
<dbReference type="HAMAP" id="MF_00333">
    <property type="entry name" value="Coprogen_oxidas"/>
    <property type="match status" value="1"/>
</dbReference>
<dbReference type="InterPro" id="IPR001260">
    <property type="entry name" value="Coprogen_oxidase_aer"/>
</dbReference>
<dbReference type="InterPro" id="IPR036406">
    <property type="entry name" value="Coprogen_oxidase_aer_sf"/>
</dbReference>
<dbReference type="InterPro" id="IPR018375">
    <property type="entry name" value="Coprogen_oxidase_CS"/>
</dbReference>
<dbReference type="NCBIfam" id="NF003727">
    <property type="entry name" value="PRK05330.1"/>
    <property type="match status" value="1"/>
</dbReference>
<dbReference type="PANTHER" id="PTHR10755">
    <property type="entry name" value="COPROPORPHYRINOGEN III OXIDASE, MITOCHONDRIAL"/>
    <property type="match status" value="1"/>
</dbReference>
<dbReference type="PANTHER" id="PTHR10755:SF0">
    <property type="entry name" value="OXYGEN-DEPENDENT COPROPORPHYRINOGEN-III OXIDASE, MITOCHONDRIAL"/>
    <property type="match status" value="1"/>
</dbReference>
<dbReference type="Pfam" id="PF01218">
    <property type="entry name" value="Coprogen_oxidas"/>
    <property type="match status" value="1"/>
</dbReference>
<dbReference type="PIRSF" id="PIRSF000166">
    <property type="entry name" value="Coproporphyri_ox"/>
    <property type="match status" value="1"/>
</dbReference>
<dbReference type="PRINTS" id="PR00073">
    <property type="entry name" value="COPRGNOXDASE"/>
</dbReference>
<dbReference type="SUPFAM" id="SSF102886">
    <property type="entry name" value="Coproporphyrinogen III oxidase"/>
    <property type="match status" value="1"/>
</dbReference>
<dbReference type="PROSITE" id="PS01021">
    <property type="entry name" value="COPROGEN_OXIDASE"/>
    <property type="match status" value="1"/>
</dbReference>
<accession>A3NT46</accession>
<protein>
    <recommendedName>
        <fullName evidence="1">Oxygen-dependent coproporphyrinogen-III oxidase</fullName>
        <shortName evidence="1">CPO</shortName>
        <shortName evidence="1">Coprogen oxidase</shortName>
        <shortName evidence="1">Coproporphyrinogenase</shortName>
        <ecNumber evidence="1">1.3.3.3</ecNumber>
    </recommendedName>
</protein>
<name>HEM6_BURP0</name>
<gene>
    <name evidence="1" type="primary">hemF</name>
    <name type="ordered locus">BURPS1106A_1238</name>
</gene>
<evidence type="ECO:0000255" key="1">
    <source>
        <dbReference type="HAMAP-Rule" id="MF_00333"/>
    </source>
</evidence>
<comment type="function">
    <text evidence="1">Involved in the heme biosynthesis. Catalyzes the aerobic oxidative decarboxylation of propionate groups of rings A and B of coproporphyrinogen-III to yield the vinyl groups in protoporphyrinogen-IX.</text>
</comment>
<comment type="catalytic activity">
    <reaction evidence="1">
        <text>coproporphyrinogen III + O2 + 2 H(+) = protoporphyrinogen IX + 2 CO2 + 2 H2O</text>
        <dbReference type="Rhea" id="RHEA:18257"/>
        <dbReference type="ChEBI" id="CHEBI:15377"/>
        <dbReference type="ChEBI" id="CHEBI:15378"/>
        <dbReference type="ChEBI" id="CHEBI:15379"/>
        <dbReference type="ChEBI" id="CHEBI:16526"/>
        <dbReference type="ChEBI" id="CHEBI:57307"/>
        <dbReference type="ChEBI" id="CHEBI:57309"/>
        <dbReference type="EC" id="1.3.3.3"/>
    </reaction>
</comment>
<comment type="cofactor">
    <cofactor evidence="1">
        <name>a divalent metal cation</name>
        <dbReference type="ChEBI" id="CHEBI:60240"/>
    </cofactor>
</comment>
<comment type="pathway">
    <text evidence="1">Porphyrin-containing compound metabolism; protoporphyrin-IX biosynthesis; protoporphyrinogen-IX from coproporphyrinogen-III (O2 route): step 1/1.</text>
</comment>
<comment type="subunit">
    <text evidence="1">Homodimer.</text>
</comment>
<comment type="subcellular location">
    <subcellularLocation>
        <location evidence="1">Cytoplasm</location>
    </subcellularLocation>
</comment>
<comment type="similarity">
    <text evidence="1">Belongs to the aerobic coproporphyrinogen-III oxidase family.</text>
</comment>
<feature type="chain" id="PRO_1000019461" description="Oxygen-dependent coproporphyrinogen-III oxidase">
    <location>
        <begin position="1"/>
        <end position="307"/>
    </location>
</feature>
<feature type="region of interest" description="Important for dimerization" evidence="1">
    <location>
        <begin position="247"/>
        <end position="282"/>
    </location>
</feature>
<feature type="active site" description="Proton donor" evidence="1">
    <location>
        <position position="113"/>
    </location>
</feature>
<feature type="binding site" evidence="1">
    <location>
        <position position="99"/>
    </location>
    <ligand>
        <name>substrate</name>
    </ligand>
</feature>
<feature type="binding site" evidence="1">
    <location>
        <position position="103"/>
    </location>
    <ligand>
        <name>a divalent metal cation</name>
        <dbReference type="ChEBI" id="CHEBI:60240"/>
    </ligand>
</feature>
<feature type="binding site" evidence="1">
    <location>
        <position position="113"/>
    </location>
    <ligand>
        <name>a divalent metal cation</name>
        <dbReference type="ChEBI" id="CHEBI:60240"/>
    </ligand>
</feature>
<feature type="binding site" evidence="1">
    <location>
        <begin position="115"/>
        <end position="117"/>
    </location>
    <ligand>
        <name>substrate</name>
    </ligand>
</feature>
<feature type="binding site" evidence="1">
    <location>
        <position position="152"/>
    </location>
    <ligand>
        <name>a divalent metal cation</name>
        <dbReference type="ChEBI" id="CHEBI:60240"/>
    </ligand>
</feature>
<feature type="binding site" evidence="1">
    <location>
        <position position="182"/>
    </location>
    <ligand>
        <name>a divalent metal cation</name>
        <dbReference type="ChEBI" id="CHEBI:60240"/>
    </ligand>
</feature>
<feature type="binding site" evidence="1">
    <location>
        <begin position="265"/>
        <end position="267"/>
    </location>
    <ligand>
        <name>substrate</name>
    </ligand>
</feature>
<feature type="site" description="Important for dimerization" evidence="1">
    <location>
        <position position="182"/>
    </location>
</feature>
<sequence>MTDSTYDVNRVRAYLQGLQMRIADALGAFDGTPLAADTWRRGPGERLRGGGCTRILEAGGFFERAGIGFSDVAGDALPPSASASRPQLAGRGFEALGVSLVLHPRNPYCPTVHMNVRMLIATKPGEAPVFWFGGGMDLTPIYGFEEDARHFHRTCRAALEPFGAELYPRFKKWCDDYFFLKHRNEARGIGGIFFDDFSELGFERSFEMLQSVGDAFLPSYLPIVERRRDTPYGERERAFQAYRRGRYVEFNLVFDRGTLFGLQSGGRTESILLSMPPTAGWRYDWHPDPGTPEARLQSEFLVPRDWA</sequence>